<protein>
    <recommendedName>
        <fullName evidence="1">UPF0434 protein Jann_0424</fullName>
    </recommendedName>
</protein>
<keyword id="KW-1185">Reference proteome</keyword>
<proteinExistence type="inferred from homology"/>
<name>Y424_JANSC</name>
<feature type="chain" id="PRO_0000291103" description="UPF0434 protein Jann_0424">
    <location>
        <begin position="1"/>
        <end position="66"/>
    </location>
</feature>
<organism>
    <name type="scientific">Jannaschia sp. (strain CCS1)</name>
    <dbReference type="NCBI Taxonomy" id="290400"/>
    <lineage>
        <taxon>Bacteria</taxon>
        <taxon>Pseudomonadati</taxon>
        <taxon>Pseudomonadota</taxon>
        <taxon>Alphaproteobacteria</taxon>
        <taxon>Rhodobacterales</taxon>
        <taxon>Roseobacteraceae</taxon>
        <taxon>Jannaschia</taxon>
    </lineage>
</organism>
<dbReference type="EMBL" id="CP000264">
    <property type="protein sequence ID" value="ABD53341.1"/>
    <property type="molecule type" value="Genomic_DNA"/>
</dbReference>
<dbReference type="RefSeq" id="WP_011453550.1">
    <property type="nucleotide sequence ID" value="NC_007802.1"/>
</dbReference>
<dbReference type="SMR" id="Q28VC1"/>
<dbReference type="STRING" id="290400.Jann_0424"/>
<dbReference type="KEGG" id="jan:Jann_0424"/>
<dbReference type="eggNOG" id="COG2835">
    <property type="taxonomic scope" value="Bacteria"/>
</dbReference>
<dbReference type="HOGENOM" id="CLU_155659_2_2_5"/>
<dbReference type="OrthoDB" id="9812205at2"/>
<dbReference type="Proteomes" id="UP000008326">
    <property type="component" value="Chromosome"/>
</dbReference>
<dbReference type="GO" id="GO:0005829">
    <property type="term" value="C:cytosol"/>
    <property type="evidence" value="ECO:0007669"/>
    <property type="project" value="TreeGrafter"/>
</dbReference>
<dbReference type="FunFam" id="2.20.25.10:FF:000002">
    <property type="entry name" value="UPF0434 protein YcaR"/>
    <property type="match status" value="1"/>
</dbReference>
<dbReference type="Gene3D" id="2.20.25.10">
    <property type="match status" value="1"/>
</dbReference>
<dbReference type="HAMAP" id="MF_01187">
    <property type="entry name" value="UPF0434"/>
    <property type="match status" value="1"/>
</dbReference>
<dbReference type="InterPro" id="IPR005651">
    <property type="entry name" value="Trm112-like"/>
</dbReference>
<dbReference type="PANTHER" id="PTHR33505:SF4">
    <property type="entry name" value="PROTEIN PREY, MITOCHONDRIAL"/>
    <property type="match status" value="1"/>
</dbReference>
<dbReference type="PANTHER" id="PTHR33505">
    <property type="entry name" value="ZGC:162634"/>
    <property type="match status" value="1"/>
</dbReference>
<dbReference type="Pfam" id="PF03966">
    <property type="entry name" value="Trm112p"/>
    <property type="match status" value="1"/>
</dbReference>
<dbReference type="SUPFAM" id="SSF158997">
    <property type="entry name" value="Trm112p-like"/>
    <property type="match status" value="1"/>
</dbReference>
<comment type="similarity">
    <text evidence="1">Belongs to the UPF0434 family.</text>
</comment>
<gene>
    <name type="ordered locus">Jann_0424</name>
</gene>
<sequence>MSDGDTNGPTGPIDRRMLEALVCPMTQAPLSYDAEKQELISKAAHLAYPIRGGIPIMLEEEARKLD</sequence>
<reference key="1">
    <citation type="submission" date="2006-02" db="EMBL/GenBank/DDBJ databases">
        <title>Complete sequence of chromosome of Jannaschia sp. CCS1.</title>
        <authorList>
            <consortium name="US DOE Joint Genome Institute"/>
            <person name="Copeland A."/>
            <person name="Lucas S."/>
            <person name="Lapidus A."/>
            <person name="Barry K."/>
            <person name="Detter J.C."/>
            <person name="Glavina del Rio T."/>
            <person name="Hammon N."/>
            <person name="Israni S."/>
            <person name="Pitluck S."/>
            <person name="Brettin T."/>
            <person name="Bruce D."/>
            <person name="Han C."/>
            <person name="Tapia R."/>
            <person name="Gilna P."/>
            <person name="Chertkov O."/>
            <person name="Saunders E."/>
            <person name="Schmutz J."/>
            <person name="Larimer F."/>
            <person name="Land M."/>
            <person name="Kyrpides N."/>
            <person name="Lykidis A."/>
            <person name="Moran M.A."/>
            <person name="Belas R."/>
            <person name="Ye W."/>
            <person name="Buchan A."/>
            <person name="Gonzalez J.M."/>
            <person name="Schell M.A."/>
            <person name="Richardson P."/>
        </authorList>
    </citation>
    <scope>NUCLEOTIDE SEQUENCE [LARGE SCALE GENOMIC DNA]</scope>
    <source>
        <strain>CCS1</strain>
    </source>
</reference>
<accession>Q28VC1</accession>
<evidence type="ECO:0000255" key="1">
    <source>
        <dbReference type="HAMAP-Rule" id="MF_01187"/>
    </source>
</evidence>